<accession>P35718</accession>
<accession>D6VX52</accession>
<evidence type="ECO:0000256" key="1">
    <source>
        <dbReference type="SAM" id="MobiDB-lite"/>
    </source>
</evidence>
<evidence type="ECO:0000269" key="2">
    <source>
    </source>
</evidence>
<evidence type="ECO:0000269" key="3">
    <source>
    </source>
</evidence>
<evidence type="ECO:0000305" key="4"/>
<evidence type="ECO:0007744" key="5">
    <source>
    </source>
</evidence>
<evidence type="ECO:0007744" key="6">
    <source>
    </source>
</evidence>
<evidence type="ECO:0007829" key="7">
    <source>
        <dbReference type="PDB" id="2CKZ"/>
    </source>
</evidence>
<evidence type="ECO:0007829" key="8">
    <source>
        <dbReference type="PDB" id="6EU1"/>
    </source>
</evidence>
<evidence type="ECO:0007829" key="9">
    <source>
        <dbReference type="PDB" id="6EU2"/>
    </source>
</evidence>
<evidence type="ECO:0007829" key="10">
    <source>
        <dbReference type="PDB" id="7Z31"/>
    </source>
</evidence>
<evidence type="ECO:0007829" key="11">
    <source>
        <dbReference type="PDB" id="8BWS"/>
    </source>
</evidence>
<proteinExistence type="evidence at protein level"/>
<name>RPC8_YEAST</name>
<comment type="function">
    <text>DNA-dependent RNA polymerase catalyzes the transcription of DNA into RNA using the four ribonucleoside triphosphates as substrates. Specific peripheric component of RNA polymerase III which synthesizes small RNAs, such as 5S rRNA and tRNA. The RPC25/RPC8-RPC17/RPC9 subcomplex may bind Pol III transcripts emerging from the adjacent exit pore during elongation.</text>
</comment>
<comment type="subunit">
    <text evidence="3">Component of the RNA polymerase III (Pol III) complex consisting of 17 subunits. RPC25/RPC8 and RPC17/RPC9 form a Pol III subcomplex.</text>
</comment>
<comment type="interaction">
    <interactant intactId="EBI-15854">
        <id>P35718</id>
    </interactant>
    <interactant intactId="EBI-25782">
        <id>P47076</id>
        <label>RPC17</label>
    </interactant>
    <organismsDiffer>false</organismsDiffer>
    <experiments>2</experiments>
</comment>
<comment type="interaction">
    <interactant intactId="EBI-15854">
        <id>P35718</id>
    </interactant>
    <interactant intactId="EBI-15810">
        <id>P04051</id>
        <label>RPO31</label>
    </interactant>
    <organismsDiffer>false</organismsDiffer>
    <experiments>4</experiments>
</comment>
<comment type="subcellular location">
    <subcellularLocation>
        <location>Nucleus</location>
    </subcellularLocation>
</comment>
<comment type="miscellaneous">
    <text evidence="2">Present with 752 molecules/cell in log phase SD medium.</text>
</comment>
<comment type="similarity">
    <text evidence="4">Belongs to the eukaryotic RPB7/RPC8 RNA polymerase subunit family.</text>
</comment>
<reference key="1">
    <citation type="journal article" date="1994" name="Mol. Cell. Biol.">
        <title>C25, an essential RNA polymerase III subunit related to the RNA polymerase II subunit RPB7.</title>
        <authorList>
            <person name="Sadhale P.P."/>
            <person name="Woychik N.A."/>
        </authorList>
    </citation>
    <scope>NUCLEOTIDE SEQUENCE [GENOMIC DNA]</scope>
</reference>
<reference key="2">
    <citation type="journal article" date="1992" name="Yeast">
        <title>Molecular cloning and physical analysis of an 8.2 kb segment of chromosome XI of Saccharomyces cerevisiae reveals five tightly linked genes.</title>
        <authorList>
            <person name="Abraham P.R."/>
            <person name="Mulder A."/>
            <person name="Van'T Riet J."/>
            <person name="Planta R.J."/>
            <person name="Raue H.A."/>
        </authorList>
    </citation>
    <scope>NUCLEOTIDE SEQUENCE [GENOMIC DNA]</scope>
</reference>
<reference key="3">
    <citation type="journal article" date="1994" name="Nature">
        <title>Complete DNA sequence of yeast chromosome XI.</title>
        <authorList>
            <person name="Dujon B."/>
            <person name="Alexandraki D."/>
            <person name="Andre B."/>
            <person name="Ansorge W."/>
            <person name="Baladron V."/>
            <person name="Ballesta J.P.G."/>
            <person name="Banrevi A."/>
            <person name="Bolle P.-A."/>
            <person name="Bolotin-Fukuhara M."/>
            <person name="Bossier P."/>
            <person name="Bou G."/>
            <person name="Boyer J."/>
            <person name="Buitrago M.J."/>
            <person name="Cheret G."/>
            <person name="Colleaux L."/>
            <person name="Daignan-Fornier B."/>
            <person name="del Rey F."/>
            <person name="Dion C."/>
            <person name="Domdey H."/>
            <person name="Duesterhoeft A."/>
            <person name="Duesterhus S."/>
            <person name="Entian K.-D."/>
            <person name="Erfle H."/>
            <person name="Esteban P.F."/>
            <person name="Feldmann H."/>
            <person name="Fernandes L."/>
            <person name="Fobo G.M."/>
            <person name="Fritz C."/>
            <person name="Fukuhara H."/>
            <person name="Gabel C."/>
            <person name="Gaillon L."/>
            <person name="Garcia-Cantalejo J.M."/>
            <person name="Garcia-Ramirez J.J."/>
            <person name="Gent M.E."/>
            <person name="Ghazvini M."/>
            <person name="Goffeau A."/>
            <person name="Gonzalez A."/>
            <person name="Grothues D."/>
            <person name="Guerreiro P."/>
            <person name="Hegemann J.H."/>
            <person name="Hewitt N."/>
            <person name="Hilger F."/>
            <person name="Hollenberg C.P."/>
            <person name="Horaitis O."/>
            <person name="Indge K.J."/>
            <person name="Jacquier A."/>
            <person name="James C.M."/>
            <person name="Jauniaux J.-C."/>
            <person name="Jimenez A."/>
            <person name="Keuchel H."/>
            <person name="Kirchrath L."/>
            <person name="Kleine K."/>
            <person name="Koetter P."/>
            <person name="Legrain P."/>
            <person name="Liebl S."/>
            <person name="Louis E.J."/>
            <person name="Maia e Silva A."/>
            <person name="Marck C."/>
            <person name="Monnier A.-L."/>
            <person name="Moestl D."/>
            <person name="Mueller S."/>
            <person name="Obermaier B."/>
            <person name="Oliver S.G."/>
            <person name="Pallier C."/>
            <person name="Pascolo S."/>
            <person name="Pfeiffer F."/>
            <person name="Philippsen P."/>
            <person name="Planta R.J."/>
            <person name="Pohl F.M."/>
            <person name="Pohl T.M."/>
            <person name="Poehlmann R."/>
            <person name="Portetelle D."/>
            <person name="Purnelle B."/>
            <person name="Puzos V."/>
            <person name="Ramezani Rad M."/>
            <person name="Rasmussen S.W."/>
            <person name="Remacha M.A."/>
            <person name="Revuelta J.L."/>
            <person name="Richard G.-F."/>
            <person name="Rieger M."/>
            <person name="Rodrigues-Pousada C."/>
            <person name="Rose M."/>
            <person name="Rupp T."/>
            <person name="Santos M.A."/>
            <person name="Schwager C."/>
            <person name="Sensen C."/>
            <person name="Skala J."/>
            <person name="Soares H."/>
            <person name="Sor F."/>
            <person name="Stegemann J."/>
            <person name="Tettelin H."/>
            <person name="Thierry A."/>
            <person name="Tzermia M."/>
            <person name="Urrestarazu L.A."/>
            <person name="van Dyck L."/>
            <person name="van Vliet-Reedijk J.C."/>
            <person name="Valens M."/>
            <person name="Vandenbol M."/>
            <person name="Vilela C."/>
            <person name="Vissers S."/>
            <person name="von Wettstein D."/>
            <person name="Voss H."/>
            <person name="Wiemann S."/>
            <person name="Xu G."/>
            <person name="Zimmermann J."/>
            <person name="Haasemann M."/>
            <person name="Becker I."/>
            <person name="Mewes H.-W."/>
        </authorList>
    </citation>
    <scope>NUCLEOTIDE SEQUENCE [LARGE SCALE GENOMIC DNA]</scope>
    <source>
        <strain>ATCC 204508 / S288c</strain>
    </source>
</reference>
<reference key="4">
    <citation type="journal article" date="2014" name="G3 (Bethesda)">
        <title>The reference genome sequence of Saccharomyces cerevisiae: Then and now.</title>
        <authorList>
            <person name="Engel S.R."/>
            <person name="Dietrich F.S."/>
            <person name="Fisk D.G."/>
            <person name="Binkley G."/>
            <person name="Balakrishnan R."/>
            <person name="Costanzo M.C."/>
            <person name="Dwight S.S."/>
            <person name="Hitz B.C."/>
            <person name="Karra K."/>
            <person name="Nash R.S."/>
            <person name="Weng S."/>
            <person name="Wong E.D."/>
            <person name="Lloyd P."/>
            <person name="Skrzypek M.S."/>
            <person name="Miyasato S.R."/>
            <person name="Simison M."/>
            <person name="Cherry J.M."/>
        </authorList>
    </citation>
    <scope>GENOME REANNOTATION</scope>
    <source>
        <strain>ATCC 204508 / S288c</strain>
    </source>
</reference>
<reference key="5">
    <citation type="journal article" date="1998" name="Cold Spring Harb. Symp. Quant. Biol.">
        <title>The yeast RNA polymerase III transcription machinery: a paradigm for eukaryotic gene activation.</title>
        <authorList>
            <person name="Chedin S."/>
            <person name="Ferri M.L."/>
            <person name="Peyroche G."/>
            <person name="Andrau J.-C."/>
            <person name="Jourdain S."/>
            <person name="Lefebvre O."/>
            <person name="Werner M."/>
            <person name="Carles C."/>
            <person name="Sentenac A."/>
        </authorList>
    </citation>
    <scope>REVIEW ON THE RNA POL III COMPLEX</scope>
</reference>
<reference key="6">
    <citation type="journal article" date="2003" name="Mol. Cell. Biol.">
        <title>An Rpb4/Rpb7-like complex in yeast RNA polymerase III contains the orthologue of mammalian CGRP-RCP.</title>
        <authorList>
            <person name="Siaut M."/>
            <person name="Zaros C."/>
            <person name="Levivier E."/>
            <person name="Ferri M.L."/>
            <person name="Court M."/>
            <person name="Werner M."/>
            <person name="Callebaut I."/>
            <person name="Thuriaux P."/>
            <person name="Sentenac A."/>
            <person name="Conesa C."/>
        </authorList>
    </citation>
    <scope>INTERACTION WITH RPC17</scope>
</reference>
<reference key="7">
    <citation type="journal article" date="2003" name="Nature">
        <title>Global analysis of protein expression in yeast.</title>
        <authorList>
            <person name="Ghaemmaghami S."/>
            <person name="Huh W.-K."/>
            <person name="Bower K."/>
            <person name="Howson R.W."/>
            <person name="Belle A."/>
            <person name="Dephoure N."/>
            <person name="O'Shea E.K."/>
            <person name="Weissman J.S."/>
        </authorList>
    </citation>
    <scope>LEVEL OF PROTEIN EXPRESSION [LARGE SCALE ANALYSIS]</scope>
</reference>
<reference key="8">
    <citation type="journal article" date="2007" name="J. Proteome Res.">
        <title>Large-scale phosphorylation analysis of alpha-factor-arrested Saccharomyces cerevisiae.</title>
        <authorList>
            <person name="Li X."/>
            <person name="Gerber S.A."/>
            <person name="Rudner A.D."/>
            <person name="Beausoleil S.A."/>
            <person name="Haas W."/>
            <person name="Villen J."/>
            <person name="Elias J.E."/>
            <person name="Gygi S.P."/>
        </authorList>
    </citation>
    <scope>PHOSPHORYLATION [LARGE SCALE ANALYSIS] AT SER-162</scope>
    <scope>IDENTIFICATION BY MASS SPECTROMETRY [LARGE SCALE ANALYSIS]</scope>
    <source>
        <strain>ADR376</strain>
    </source>
</reference>
<reference key="9">
    <citation type="journal article" date="2009" name="Science">
        <title>Global analysis of Cdk1 substrate phosphorylation sites provides insights into evolution.</title>
        <authorList>
            <person name="Holt L.J."/>
            <person name="Tuch B.B."/>
            <person name="Villen J."/>
            <person name="Johnson A.D."/>
            <person name="Gygi S.P."/>
            <person name="Morgan D.O."/>
        </authorList>
    </citation>
    <scope>PHOSPHORYLATION [LARGE SCALE ANALYSIS] AT SER-162</scope>
    <scope>IDENTIFICATION BY MASS SPECTROMETRY [LARGE SCALE ANALYSIS]</scope>
</reference>
<reference key="10">
    <citation type="journal article" date="2006" name="Mol. Cell">
        <title>Structural biology of RNA polymerase III: subcomplex C17/25 X-ray structure and 11 subunit enzyme model.</title>
        <authorList>
            <person name="Jasiak A.J."/>
            <person name="Armache K.J."/>
            <person name="Martens B."/>
            <person name="Jansen R.P."/>
            <person name="Cramer P."/>
        </authorList>
    </citation>
    <scope>X-RAY CRYSTALLOGRAPHY (3.2 ANGSTROMS) IN COMPLEX WITH RPC17</scope>
    <scope>3D-STRUCTURE MODELING OF THE POL III CORE COMPLEX</scope>
</reference>
<protein>
    <recommendedName>
        <fullName>DNA-directed RNA polymerase III subunit RPC8</fullName>
        <shortName>RNA polymerase III subunit C8</shortName>
    </recommendedName>
    <alternativeName>
        <fullName>DNA-directed RNA polymerase III 25 kDa polypeptide</fullName>
    </alternativeName>
    <alternativeName>
        <fullName>RNA polymerase III subunit C25</fullName>
    </alternativeName>
</protein>
<gene>
    <name type="primary">RPC25</name>
    <name type="ordered locus">YKL144C</name>
    <name type="ORF">UNF1</name>
    <name type="ORF">YKL1</name>
</gene>
<keyword id="KW-0002">3D-structure</keyword>
<keyword id="KW-0240">DNA-directed RNA polymerase</keyword>
<keyword id="KW-0539">Nucleus</keyword>
<keyword id="KW-0597">Phosphoprotein</keyword>
<keyword id="KW-1185">Reference proteome</keyword>
<keyword id="KW-0804">Transcription</keyword>
<dbReference type="EMBL" id="U11048">
    <property type="protein sequence ID" value="AAA20241.1"/>
    <property type="molecule type" value="Genomic_DNA"/>
</dbReference>
<dbReference type="EMBL" id="Z25464">
    <property type="protein sequence ID" value="CAA80954.1"/>
    <property type="molecule type" value="Genomic_DNA"/>
</dbReference>
<dbReference type="EMBL" id="Z28144">
    <property type="protein sequence ID" value="CAA81985.1"/>
    <property type="molecule type" value="Genomic_DNA"/>
</dbReference>
<dbReference type="EMBL" id="BK006944">
    <property type="protein sequence ID" value="DAA09018.1"/>
    <property type="molecule type" value="Genomic_DNA"/>
</dbReference>
<dbReference type="PIR" id="S37973">
    <property type="entry name" value="S37973"/>
</dbReference>
<dbReference type="RefSeq" id="NP_012778.1">
    <property type="nucleotide sequence ID" value="NM_001179710.1"/>
</dbReference>
<dbReference type="PDB" id="2CKZ">
    <property type="method" value="X-ray"/>
    <property type="resolution" value="3.20 A"/>
    <property type="chains" value="B/D=1-212"/>
</dbReference>
<dbReference type="PDB" id="5FJ8">
    <property type="method" value="EM"/>
    <property type="resolution" value="3.90 A"/>
    <property type="chains" value="G=1-212"/>
</dbReference>
<dbReference type="PDB" id="5FJ9">
    <property type="method" value="EM"/>
    <property type="resolution" value="4.60 A"/>
    <property type="chains" value="G=1-212"/>
</dbReference>
<dbReference type="PDB" id="5FJA">
    <property type="method" value="EM"/>
    <property type="resolution" value="4.65 A"/>
    <property type="chains" value="G=1-212"/>
</dbReference>
<dbReference type="PDB" id="6CNB">
    <property type="method" value="EM"/>
    <property type="resolution" value="4.10 A"/>
    <property type="chains" value="G=1-212"/>
</dbReference>
<dbReference type="PDB" id="6CNC">
    <property type="method" value="EM"/>
    <property type="resolution" value="4.10 A"/>
    <property type="chains" value="G=1-212"/>
</dbReference>
<dbReference type="PDB" id="6CND">
    <property type="method" value="EM"/>
    <property type="resolution" value="4.80 A"/>
    <property type="chains" value="G=1-212"/>
</dbReference>
<dbReference type="PDB" id="6CNF">
    <property type="method" value="EM"/>
    <property type="resolution" value="4.50 A"/>
    <property type="chains" value="G=1-212"/>
</dbReference>
<dbReference type="PDB" id="6EU0">
    <property type="method" value="EM"/>
    <property type="resolution" value="4.00 A"/>
    <property type="chains" value="G=1-212"/>
</dbReference>
<dbReference type="PDB" id="6EU1">
    <property type="method" value="EM"/>
    <property type="resolution" value="3.40 A"/>
    <property type="chains" value="G=1-212"/>
</dbReference>
<dbReference type="PDB" id="6EU2">
    <property type="method" value="EM"/>
    <property type="resolution" value="3.40 A"/>
    <property type="chains" value="G=1-212"/>
</dbReference>
<dbReference type="PDB" id="6EU3">
    <property type="method" value="EM"/>
    <property type="resolution" value="3.30 A"/>
    <property type="chains" value="G=1-212"/>
</dbReference>
<dbReference type="PDB" id="6F40">
    <property type="method" value="EM"/>
    <property type="resolution" value="3.70 A"/>
    <property type="chains" value="G=1-212"/>
</dbReference>
<dbReference type="PDB" id="6F41">
    <property type="method" value="EM"/>
    <property type="resolution" value="4.30 A"/>
    <property type="chains" value="G=1-212"/>
</dbReference>
<dbReference type="PDB" id="6F42">
    <property type="method" value="EM"/>
    <property type="resolution" value="5.50 A"/>
    <property type="chains" value="G=1-212"/>
</dbReference>
<dbReference type="PDB" id="6F44">
    <property type="method" value="EM"/>
    <property type="resolution" value="4.20 A"/>
    <property type="chains" value="G=1-212"/>
</dbReference>
<dbReference type="PDB" id="6TUT">
    <property type="method" value="EM"/>
    <property type="resolution" value="3.25 A"/>
    <property type="chains" value="G=1-212"/>
</dbReference>
<dbReference type="PDB" id="7Z0H">
    <property type="method" value="EM"/>
    <property type="resolution" value="2.60 A"/>
    <property type="chains" value="G=1-212"/>
</dbReference>
<dbReference type="PDB" id="7Z1L">
    <property type="method" value="EM"/>
    <property type="resolution" value="2.80 A"/>
    <property type="chains" value="G=1-212"/>
</dbReference>
<dbReference type="PDB" id="7Z1M">
    <property type="method" value="EM"/>
    <property type="resolution" value="3.40 A"/>
    <property type="chains" value="G=1-212"/>
</dbReference>
<dbReference type="PDB" id="7Z1N">
    <property type="method" value="EM"/>
    <property type="resolution" value="3.90 A"/>
    <property type="chains" value="G=1-212"/>
</dbReference>
<dbReference type="PDB" id="7Z1O">
    <property type="method" value="EM"/>
    <property type="resolution" value="2.70 A"/>
    <property type="chains" value="G=1-212"/>
</dbReference>
<dbReference type="PDB" id="7Z2Z">
    <property type="method" value="EM"/>
    <property type="resolution" value="3.07 A"/>
    <property type="chains" value="G=1-212"/>
</dbReference>
<dbReference type="PDB" id="7Z30">
    <property type="method" value="EM"/>
    <property type="resolution" value="2.90 A"/>
    <property type="chains" value="G=1-212"/>
</dbReference>
<dbReference type="PDB" id="7Z31">
    <property type="method" value="EM"/>
    <property type="resolution" value="2.76 A"/>
    <property type="chains" value="G=1-212"/>
</dbReference>
<dbReference type="PDB" id="8BWS">
    <property type="method" value="EM"/>
    <property type="resolution" value="3.20 A"/>
    <property type="chains" value="G=1-212"/>
</dbReference>
<dbReference type="PDBsum" id="2CKZ"/>
<dbReference type="PDBsum" id="5FJ8"/>
<dbReference type="PDBsum" id="5FJ9"/>
<dbReference type="PDBsum" id="5FJA"/>
<dbReference type="PDBsum" id="6CNB"/>
<dbReference type="PDBsum" id="6CNC"/>
<dbReference type="PDBsum" id="6CND"/>
<dbReference type="PDBsum" id="6CNF"/>
<dbReference type="PDBsum" id="6EU0"/>
<dbReference type="PDBsum" id="6EU1"/>
<dbReference type="PDBsum" id="6EU2"/>
<dbReference type="PDBsum" id="6EU3"/>
<dbReference type="PDBsum" id="6F40"/>
<dbReference type="PDBsum" id="6F41"/>
<dbReference type="PDBsum" id="6F42"/>
<dbReference type="PDBsum" id="6F44"/>
<dbReference type="PDBsum" id="6TUT"/>
<dbReference type="PDBsum" id="7Z0H"/>
<dbReference type="PDBsum" id="7Z1L"/>
<dbReference type="PDBsum" id="7Z1M"/>
<dbReference type="PDBsum" id="7Z1N"/>
<dbReference type="PDBsum" id="7Z1O"/>
<dbReference type="PDBsum" id="7Z2Z"/>
<dbReference type="PDBsum" id="7Z30"/>
<dbReference type="PDBsum" id="7Z31"/>
<dbReference type="PDBsum" id="8BWS"/>
<dbReference type="EMDB" id="EMD-10595"/>
<dbReference type="EMDB" id="EMD-14421"/>
<dbReference type="EMDB" id="EMD-14447"/>
<dbReference type="EMDB" id="EMD-14448"/>
<dbReference type="EMDB" id="EMD-14449"/>
<dbReference type="EMDB" id="EMD-14451"/>
<dbReference type="EMDB" id="EMD-14468"/>
<dbReference type="EMDB" id="EMD-14469"/>
<dbReference type="EMDB" id="EMD-14470"/>
<dbReference type="EMDB" id="EMD-16299"/>
<dbReference type="EMDB" id="EMD-3955"/>
<dbReference type="EMDB" id="EMD-3956"/>
<dbReference type="EMDB" id="EMD-3957"/>
<dbReference type="EMDB" id="EMD-3958"/>
<dbReference type="EMDB" id="EMD-4180"/>
<dbReference type="EMDB" id="EMD-4181"/>
<dbReference type="EMDB" id="EMD-4182"/>
<dbReference type="EMDB" id="EMD-4183"/>
<dbReference type="EMDB" id="EMD-7530"/>
<dbReference type="EMDB" id="EMD-7531"/>
<dbReference type="EMDB" id="EMD-7532"/>
<dbReference type="EMDB" id="EMD-7533"/>
<dbReference type="SMR" id="P35718"/>
<dbReference type="BioGRID" id="33992">
    <property type="interactions" value="482"/>
</dbReference>
<dbReference type="ComplexPortal" id="CPX-2660">
    <property type="entry name" value="DNA-directed RNA polymerase III complex"/>
</dbReference>
<dbReference type="DIP" id="DIP-1414N"/>
<dbReference type="FunCoup" id="P35718">
    <property type="interactions" value="852"/>
</dbReference>
<dbReference type="IntAct" id="P35718">
    <property type="interactions" value="24"/>
</dbReference>
<dbReference type="MINT" id="P35718"/>
<dbReference type="STRING" id="4932.YKL144C"/>
<dbReference type="iPTMnet" id="P35718"/>
<dbReference type="PaxDb" id="4932-YKL144C"/>
<dbReference type="PeptideAtlas" id="P35718"/>
<dbReference type="EnsemblFungi" id="YKL144C_mRNA">
    <property type="protein sequence ID" value="YKL144C"/>
    <property type="gene ID" value="YKL144C"/>
</dbReference>
<dbReference type="GeneID" id="853713"/>
<dbReference type="KEGG" id="sce:YKL144C"/>
<dbReference type="AGR" id="SGD:S000001627"/>
<dbReference type="SGD" id="S000001627">
    <property type="gene designation" value="RPC25"/>
</dbReference>
<dbReference type="VEuPathDB" id="FungiDB:YKL144C"/>
<dbReference type="eggNOG" id="KOG3297">
    <property type="taxonomic scope" value="Eukaryota"/>
</dbReference>
<dbReference type="GeneTree" id="ENSGT00390000004383"/>
<dbReference type="HOGENOM" id="CLU_073901_1_1_1"/>
<dbReference type="InParanoid" id="P35718"/>
<dbReference type="OMA" id="LGPTLWW"/>
<dbReference type="OrthoDB" id="10256606at2759"/>
<dbReference type="BioCyc" id="YEAST:G3O-31919-MONOMER"/>
<dbReference type="Reactome" id="R-SCE-76066">
    <property type="pathway name" value="RNA Polymerase III Transcription Initiation From Type 2 Promoter"/>
</dbReference>
<dbReference type="BioGRID-ORCS" id="853713">
    <property type="hits" value="6 hits in 10 CRISPR screens"/>
</dbReference>
<dbReference type="EvolutionaryTrace" id="P35718"/>
<dbReference type="PRO" id="PR:P35718"/>
<dbReference type="Proteomes" id="UP000002311">
    <property type="component" value="Chromosome XI"/>
</dbReference>
<dbReference type="RNAct" id="P35718">
    <property type="molecule type" value="protein"/>
</dbReference>
<dbReference type="GO" id="GO:0005654">
    <property type="term" value="C:nucleoplasm"/>
    <property type="evidence" value="ECO:0000304"/>
    <property type="project" value="Reactome"/>
</dbReference>
<dbReference type="GO" id="GO:0005634">
    <property type="term" value="C:nucleus"/>
    <property type="evidence" value="ECO:0000303"/>
    <property type="project" value="ComplexPortal"/>
</dbReference>
<dbReference type="GO" id="GO:0005666">
    <property type="term" value="C:RNA polymerase III complex"/>
    <property type="evidence" value="ECO:0000314"/>
    <property type="project" value="SGD"/>
</dbReference>
<dbReference type="GO" id="GO:0003677">
    <property type="term" value="F:DNA binding"/>
    <property type="evidence" value="ECO:0007669"/>
    <property type="project" value="InterPro"/>
</dbReference>
<dbReference type="GO" id="GO:0003899">
    <property type="term" value="F:DNA-directed RNA polymerase activity"/>
    <property type="evidence" value="ECO:0007669"/>
    <property type="project" value="InterPro"/>
</dbReference>
<dbReference type="GO" id="GO:0006386">
    <property type="term" value="P:termination of RNA polymerase III transcription"/>
    <property type="evidence" value="ECO:0000314"/>
    <property type="project" value="ComplexPortal"/>
</dbReference>
<dbReference type="GO" id="GO:0006383">
    <property type="term" value="P:transcription by RNA polymerase III"/>
    <property type="evidence" value="ECO:0000314"/>
    <property type="project" value="ComplexPortal"/>
</dbReference>
<dbReference type="GO" id="GO:0006384">
    <property type="term" value="P:transcription initiation at RNA polymerase III promoter"/>
    <property type="evidence" value="ECO:0000314"/>
    <property type="project" value="ComplexPortal"/>
</dbReference>
<dbReference type="GO" id="GO:0042797">
    <property type="term" value="P:tRNA transcription by RNA polymerase III"/>
    <property type="evidence" value="ECO:0000314"/>
    <property type="project" value="SGD"/>
</dbReference>
<dbReference type="CDD" id="cd04330">
    <property type="entry name" value="RNAP_III_Rpc25_N"/>
    <property type="match status" value="1"/>
</dbReference>
<dbReference type="FunFam" id="2.40.50.140:FF:000221">
    <property type="entry name" value="DNA-directed RNA polymerase III subunit"/>
    <property type="match status" value="1"/>
</dbReference>
<dbReference type="FunFam" id="3.30.1490.120:FF:000005">
    <property type="entry name" value="DNA-directed RNA polymerase III subunit"/>
    <property type="match status" value="1"/>
</dbReference>
<dbReference type="Gene3D" id="2.40.50.140">
    <property type="entry name" value="Nucleic acid-binding proteins"/>
    <property type="match status" value="1"/>
</dbReference>
<dbReference type="Gene3D" id="3.30.1490.120">
    <property type="entry name" value="RNA polymerase Rpb7-like, N-terminal domain"/>
    <property type="match status" value="1"/>
</dbReference>
<dbReference type="InterPro" id="IPR012340">
    <property type="entry name" value="NA-bd_OB-fold"/>
</dbReference>
<dbReference type="InterPro" id="IPR013238">
    <property type="entry name" value="RNA_pol_III_Rbc25"/>
</dbReference>
<dbReference type="InterPro" id="IPR036898">
    <property type="entry name" value="RNA_pol_Rpb7-like_N_sf"/>
</dbReference>
<dbReference type="InterPro" id="IPR004519">
    <property type="entry name" value="RNAP_E/RPC8"/>
</dbReference>
<dbReference type="InterPro" id="IPR045113">
    <property type="entry name" value="Rpb7-like"/>
</dbReference>
<dbReference type="InterPro" id="IPR005576">
    <property type="entry name" value="Rpb7-like_N"/>
</dbReference>
<dbReference type="NCBIfam" id="TIGR00448">
    <property type="entry name" value="rpoE"/>
    <property type="match status" value="1"/>
</dbReference>
<dbReference type="PANTHER" id="PTHR12709">
    <property type="entry name" value="DNA-DIRECTED RNA POLYMERASE II, III"/>
    <property type="match status" value="1"/>
</dbReference>
<dbReference type="PANTHER" id="PTHR12709:SF1">
    <property type="entry name" value="DNA-DIRECTED RNA POLYMERASE III SUBUNIT RPC8"/>
    <property type="match status" value="1"/>
</dbReference>
<dbReference type="Pfam" id="PF08292">
    <property type="entry name" value="RNA_pol_Rbc25"/>
    <property type="match status" value="1"/>
</dbReference>
<dbReference type="Pfam" id="PF03876">
    <property type="entry name" value="SHS2_Rpb7-N"/>
    <property type="match status" value="1"/>
</dbReference>
<dbReference type="SUPFAM" id="SSF88798">
    <property type="entry name" value="N-terminal, heterodimerisation domain of RBP7 (RpoE)"/>
    <property type="match status" value="1"/>
</dbReference>
<dbReference type="SUPFAM" id="SSF50249">
    <property type="entry name" value="Nucleic acid-binding proteins"/>
    <property type="match status" value="1"/>
</dbReference>
<sequence length="212" mass="24326">MFILSKIADLVRIPPDQFHRDTISAITHQLNNKFANKIIPNVGLCITIYDLLTVEEGQLKPGDGSSYINVTFRAVVFKPFLGEIVTGWISKCTAEGIKVSLLGIFDDIFIPQNMLFEGCYYTPEESAWIWPMDEETKLYFDVNEKIRFRIEREVFVDVKPKSPKERELEERAQLENEIEGKNEETPQNEKPPAYALLGSCQTDGMGLVSWWE</sequence>
<organism>
    <name type="scientific">Saccharomyces cerevisiae (strain ATCC 204508 / S288c)</name>
    <name type="common">Baker's yeast</name>
    <dbReference type="NCBI Taxonomy" id="559292"/>
    <lineage>
        <taxon>Eukaryota</taxon>
        <taxon>Fungi</taxon>
        <taxon>Dikarya</taxon>
        <taxon>Ascomycota</taxon>
        <taxon>Saccharomycotina</taxon>
        <taxon>Saccharomycetes</taxon>
        <taxon>Saccharomycetales</taxon>
        <taxon>Saccharomycetaceae</taxon>
        <taxon>Saccharomyces</taxon>
    </lineage>
</organism>
<feature type="chain" id="PRO_0000073996" description="DNA-directed RNA polymerase III subunit RPC8">
    <location>
        <begin position="1"/>
        <end position="212"/>
    </location>
</feature>
<feature type="region of interest" description="Disordered" evidence="1">
    <location>
        <begin position="166"/>
        <end position="194"/>
    </location>
</feature>
<feature type="compositionally biased region" description="Basic and acidic residues" evidence="1">
    <location>
        <begin position="166"/>
        <end position="184"/>
    </location>
</feature>
<feature type="modified residue" description="Phosphoserine" evidence="5 6">
    <location>
        <position position="162"/>
    </location>
</feature>
<feature type="strand" evidence="10">
    <location>
        <begin position="6"/>
        <end position="13"/>
    </location>
</feature>
<feature type="helix" evidence="10">
    <location>
        <begin position="15"/>
        <end position="18"/>
    </location>
</feature>
<feature type="helix" evidence="10">
    <location>
        <begin position="22"/>
        <end position="33"/>
    </location>
</feature>
<feature type="strand" evidence="10">
    <location>
        <begin position="34"/>
        <end position="36"/>
    </location>
</feature>
<feature type="strand" evidence="7">
    <location>
        <begin position="37"/>
        <end position="39"/>
    </location>
</feature>
<feature type="turn" evidence="10">
    <location>
        <begin position="40"/>
        <end position="42"/>
    </location>
</feature>
<feature type="strand" evidence="10">
    <location>
        <begin position="43"/>
        <end position="54"/>
    </location>
</feature>
<feature type="turn" evidence="10">
    <location>
        <begin position="61"/>
        <end position="63"/>
    </location>
</feature>
<feature type="strand" evidence="10">
    <location>
        <begin position="65"/>
        <end position="77"/>
    </location>
</feature>
<feature type="strand" evidence="7">
    <location>
        <begin position="84"/>
        <end position="93"/>
    </location>
</feature>
<feature type="strand" evidence="10">
    <location>
        <begin position="96"/>
        <end position="99"/>
    </location>
</feature>
<feature type="strand" evidence="10">
    <location>
        <begin position="102"/>
        <end position="104"/>
    </location>
</feature>
<feature type="strand" evidence="7">
    <location>
        <begin position="108"/>
        <end position="111"/>
    </location>
</feature>
<feature type="turn" evidence="10">
    <location>
        <begin position="112"/>
        <end position="114"/>
    </location>
</feature>
<feature type="strand" evidence="7">
    <location>
        <begin position="120"/>
        <end position="122"/>
    </location>
</feature>
<feature type="turn" evidence="7">
    <location>
        <begin position="123"/>
        <end position="126"/>
    </location>
</feature>
<feature type="strand" evidence="7">
    <location>
        <begin position="127"/>
        <end position="131"/>
    </location>
</feature>
<feature type="strand" evidence="11">
    <location>
        <begin position="132"/>
        <end position="134"/>
    </location>
</feature>
<feature type="strand" evidence="7">
    <location>
        <begin position="137"/>
        <end position="140"/>
    </location>
</feature>
<feature type="strand" evidence="10">
    <location>
        <begin position="142"/>
        <end position="146"/>
    </location>
</feature>
<feature type="strand" evidence="9">
    <location>
        <begin position="147"/>
        <end position="149"/>
    </location>
</feature>
<feature type="helix" evidence="10">
    <location>
        <begin position="163"/>
        <end position="172"/>
    </location>
</feature>
<feature type="strand" evidence="8">
    <location>
        <begin position="176"/>
        <end position="178"/>
    </location>
</feature>
<feature type="strand" evidence="7">
    <location>
        <begin position="193"/>
        <end position="199"/>
    </location>
</feature>
<feature type="turn" evidence="10">
    <location>
        <begin position="203"/>
        <end position="206"/>
    </location>
</feature>
<feature type="helix" evidence="7">
    <location>
        <begin position="208"/>
        <end position="210"/>
    </location>
</feature>